<reference key="1">
    <citation type="journal article" date="2002" name="Nature">
        <title>Complete genome sequence of the model actinomycete Streptomyces coelicolor A3(2).</title>
        <authorList>
            <person name="Bentley S.D."/>
            <person name="Chater K.F."/>
            <person name="Cerdeno-Tarraga A.-M."/>
            <person name="Challis G.L."/>
            <person name="Thomson N.R."/>
            <person name="James K.D."/>
            <person name="Harris D.E."/>
            <person name="Quail M.A."/>
            <person name="Kieser H."/>
            <person name="Harper D."/>
            <person name="Bateman A."/>
            <person name="Brown S."/>
            <person name="Chandra G."/>
            <person name="Chen C.W."/>
            <person name="Collins M."/>
            <person name="Cronin A."/>
            <person name="Fraser A."/>
            <person name="Goble A."/>
            <person name="Hidalgo J."/>
            <person name="Hornsby T."/>
            <person name="Howarth S."/>
            <person name="Huang C.-H."/>
            <person name="Kieser T."/>
            <person name="Larke L."/>
            <person name="Murphy L.D."/>
            <person name="Oliver K."/>
            <person name="O'Neil S."/>
            <person name="Rabbinowitsch E."/>
            <person name="Rajandream M.A."/>
            <person name="Rutherford K.M."/>
            <person name="Rutter S."/>
            <person name="Seeger K."/>
            <person name="Saunders D."/>
            <person name="Sharp S."/>
            <person name="Squares R."/>
            <person name="Squares S."/>
            <person name="Taylor K."/>
            <person name="Warren T."/>
            <person name="Wietzorrek A."/>
            <person name="Woodward J.R."/>
            <person name="Barrell B.G."/>
            <person name="Parkhill J."/>
            <person name="Hopwood D.A."/>
        </authorList>
    </citation>
    <scope>NUCLEOTIDE SEQUENCE [LARGE SCALE GENOMIC DNA]</scope>
    <source>
        <strain>ATCC BAA-471 / A3(2) / M145</strain>
    </source>
</reference>
<gene>
    <name evidence="1" type="primary">atpH</name>
    <name type="ordered locus">SCO5370</name>
    <name type="ORF">2SC6G5.14</name>
</gene>
<protein>
    <recommendedName>
        <fullName evidence="1">ATP synthase subunit delta</fullName>
    </recommendedName>
    <alternativeName>
        <fullName evidence="1">ATP synthase F(1) sector subunit delta</fullName>
    </alternativeName>
    <alternativeName>
        <fullName evidence="1">F-type ATPase subunit delta</fullName>
        <shortName evidence="1">F-ATPase subunit delta</shortName>
    </alternativeName>
</protein>
<feature type="chain" id="PRO_0000371171" description="ATP synthase subunit delta">
    <location>
        <begin position="1"/>
        <end position="274"/>
    </location>
</feature>
<name>ATPD_STRCO</name>
<dbReference type="EMBL" id="AL939123">
    <property type="protein sequence ID" value="CAB94541.1"/>
    <property type="molecule type" value="Genomic_DNA"/>
</dbReference>
<dbReference type="RefSeq" id="NP_629509.1">
    <property type="nucleotide sequence ID" value="NC_003888.3"/>
</dbReference>
<dbReference type="SMR" id="Q9K4D6"/>
<dbReference type="FunCoup" id="Q9K4D6">
    <property type="interactions" value="48"/>
</dbReference>
<dbReference type="STRING" id="100226.gene:17763022"/>
<dbReference type="PaxDb" id="100226-SCO5370"/>
<dbReference type="KEGG" id="sco:SCO5370"/>
<dbReference type="PATRIC" id="fig|100226.15.peg.5450"/>
<dbReference type="eggNOG" id="COG0712">
    <property type="taxonomic scope" value="Bacteria"/>
</dbReference>
<dbReference type="HOGENOM" id="CLU_088880_0_0_11"/>
<dbReference type="InParanoid" id="Q9K4D6"/>
<dbReference type="OrthoDB" id="5242917at2"/>
<dbReference type="PhylomeDB" id="Q9K4D6"/>
<dbReference type="Proteomes" id="UP000001973">
    <property type="component" value="Chromosome"/>
</dbReference>
<dbReference type="GO" id="GO:0005886">
    <property type="term" value="C:plasma membrane"/>
    <property type="evidence" value="ECO:0007669"/>
    <property type="project" value="UniProtKB-SubCell"/>
</dbReference>
<dbReference type="GO" id="GO:0045259">
    <property type="term" value="C:proton-transporting ATP synthase complex"/>
    <property type="evidence" value="ECO:0007669"/>
    <property type="project" value="UniProtKB-KW"/>
</dbReference>
<dbReference type="GO" id="GO:0046933">
    <property type="term" value="F:proton-transporting ATP synthase activity, rotational mechanism"/>
    <property type="evidence" value="ECO:0007669"/>
    <property type="project" value="UniProtKB-UniRule"/>
</dbReference>
<dbReference type="GO" id="GO:0015986">
    <property type="term" value="P:proton motive force-driven ATP synthesis"/>
    <property type="evidence" value="ECO:0000318"/>
    <property type="project" value="GO_Central"/>
</dbReference>
<dbReference type="Gene3D" id="1.10.520.20">
    <property type="entry name" value="N-terminal domain of the delta subunit of the F1F0-ATP synthase"/>
    <property type="match status" value="1"/>
</dbReference>
<dbReference type="HAMAP" id="MF_01416">
    <property type="entry name" value="ATP_synth_delta_bact"/>
    <property type="match status" value="1"/>
</dbReference>
<dbReference type="InterPro" id="IPR026015">
    <property type="entry name" value="ATP_synth_OSCP/delta_N_sf"/>
</dbReference>
<dbReference type="InterPro" id="IPR020781">
    <property type="entry name" value="ATPase_OSCP/d_CS"/>
</dbReference>
<dbReference type="InterPro" id="IPR000711">
    <property type="entry name" value="ATPase_OSCP/dsu"/>
</dbReference>
<dbReference type="NCBIfam" id="TIGR01145">
    <property type="entry name" value="ATP_synt_delta"/>
    <property type="match status" value="1"/>
</dbReference>
<dbReference type="NCBIfam" id="NF009967">
    <property type="entry name" value="PRK13430.1"/>
    <property type="match status" value="1"/>
</dbReference>
<dbReference type="PANTHER" id="PTHR11910">
    <property type="entry name" value="ATP SYNTHASE DELTA CHAIN"/>
    <property type="match status" value="1"/>
</dbReference>
<dbReference type="Pfam" id="PF00213">
    <property type="entry name" value="OSCP"/>
    <property type="match status" value="1"/>
</dbReference>
<dbReference type="PRINTS" id="PR00125">
    <property type="entry name" value="ATPASEDELTA"/>
</dbReference>
<dbReference type="PROSITE" id="PS00389">
    <property type="entry name" value="ATPASE_DELTA"/>
    <property type="match status" value="1"/>
</dbReference>
<keyword id="KW-0066">ATP synthesis</keyword>
<keyword id="KW-1003">Cell membrane</keyword>
<keyword id="KW-0139">CF(1)</keyword>
<keyword id="KW-0375">Hydrogen ion transport</keyword>
<keyword id="KW-0406">Ion transport</keyword>
<keyword id="KW-0472">Membrane</keyword>
<keyword id="KW-1185">Reference proteome</keyword>
<keyword id="KW-0813">Transport</keyword>
<proteinExistence type="inferred from homology"/>
<comment type="function">
    <text evidence="1">F(1)F(0) ATP synthase produces ATP from ADP in the presence of a proton or sodium gradient. F-type ATPases consist of two structural domains, F(1) containing the extramembraneous catalytic core and F(0) containing the membrane proton channel, linked together by a central stalk and a peripheral stalk. During catalysis, ATP synthesis in the catalytic domain of F(1) is coupled via a rotary mechanism of the central stalk subunits to proton translocation.</text>
</comment>
<comment type="function">
    <text evidence="1">This protein is part of the stalk that links CF(0) to CF(1). It either transmits conformational changes from CF(0) to CF(1) or is implicated in proton conduction.</text>
</comment>
<comment type="subunit">
    <text evidence="1">F-type ATPases have 2 components, F(1) - the catalytic core - and F(0) - the membrane proton channel. F(1) has five subunits: alpha(3), beta(3), gamma(1), delta(1), epsilon(1). F(0) has three main subunits: a(1), b(2) and c(10-14). The alpha and beta chains form an alternating ring which encloses part of the gamma chain. F(1) is attached to F(0) by a central stalk formed by the gamma and epsilon chains, while a peripheral stalk is formed by the delta and b chains.</text>
</comment>
<comment type="subcellular location">
    <subcellularLocation>
        <location evidence="1">Cell membrane</location>
        <topology evidence="1">Peripheral membrane protein</topology>
    </subcellularLocation>
</comment>
<comment type="similarity">
    <text evidence="1">Belongs to the ATPase delta chain family.</text>
</comment>
<evidence type="ECO:0000255" key="1">
    <source>
        <dbReference type="HAMAP-Rule" id="MF_01416"/>
    </source>
</evidence>
<sequence>MSGMHGASREALAAARERLDALTDSTSVDAGSLADELAAVTALLHREVSLRRVLTDPAQSGEAKAELAQRLLGTQVSGTAVDLVAGTVRSRWSQSRDLVDALEQLANIADLTAAQKRGRLDNVEDELFRFGRIISSNTELRAALTSRSATTAAKSELLAGLLGSRAERTTERLVTRLVTAPRGRSLESGLESLSKLAADRRDRMVAVVTSAVPLSDTQKQRLGAALAKVYGRPMHLNLDVDPEVLGGIRVQVGDEVINGSIADRLEDAGRRLAS</sequence>
<accession>Q9K4D6</accession>
<organism>
    <name type="scientific">Streptomyces coelicolor (strain ATCC BAA-471 / A3(2) / M145)</name>
    <dbReference type="NCBI Taxonomy" id="100226"/>
    <lineage>
        <taxon>Bacteria</taxon>
        <taxon>Bacillati</taxon>
        <taxon>Actinomycetota</taxon>
        <taxon>Actinomycetes</taxon>
        <taxon>Kitasatosporales</taxon>
        <taxon>Streptomycetaceae</taxon>
        <taxon>Streptomyces</taxon>
        <taxon>Streptomyces albidoflavus group</taxon>
    </lineage>
</organism>